<feature type="chain" id="PRO_0000425614" description="Transcription factor SFL1">
    <location>
        <begin position="1"/>
        <end position="805"/>
    </location>
</feature>
<feature type="DNA-binding region" evidence="1">
    <location>
        <begin position="117"/>
        <end position="226"/>
    </location>
</feature>
<feature type="region of interest" description="Disordered" evidence="2">
    <location>
        <begin position="1"/>
        <end position="110"/>
    </location>
</feature>
<feature type="region of interest" description="Disordered" evidence="2">
    <location>
        <begin position="273"/>
        <end position="336"/>
    </location>
</feature>
<feature type="region of interest" description="Disordered" evidence="2">
    <location>
        <begin position="438"/>
        <end position="483"/>
    </location>
</feature>
<feature type="region of interest" description="Disordered" evidence="2">
    <location>
        <begin position="513"/>
        <end position="675"/>
    </location>
</feature>
<feature type="region of interest" description="Disordered" evidence="2">
    <location>
        <begin position="691"/>
        <end position="746"/>
    </location>
</feature>
<feature type="region of interest" description="Disordered" evidence="2">
    <location>
        <begin position="759"/>
        <end position="805"/>
    </location>
</feature>
<feature type="compositionally biased region" description="Low complexity" evidence="2">
    <location>
        <begin position="1"/>
        <end position="24"/>
    </location>
</feature>
<feature type="compositionally biased region" description="Polar residues" evidence="2">
    <location>
        <begin position="25"/>
        <end position="69"/>
    </location>
</feature>
<feature type="compositionally biased region" description="Basic and acidic residues" evidence="2">
    <location>
        <begin position="71"/>
        <end position="85"/>
    </location>
</feature>
<feature type="compositionally biased region" description="Low complexity" evidence="2">
    <location>
        <begin position="86"/>
        <end position="110"/>
    </location>
</feature>
<feature type="compositionally biased region" description="Low complexity" evidence="2">
    <location>
        <begin position="295"/>
        <end position="310"/>
    </location>
</feature>
<feature type="compositionally biased region" description="Polar residues" evidence="2">
    <location>
        <begin position="454"/>
        <end position="480"/>
    </location>
</feature>
<feature type="compositionally biased region" description="Polar residues" evidence="2">
    <location>
        <begin position="533"/>
        <end position="556"/>
    </location>
</feature>
<feature type="compositionally biased region" description="Low complexity" evidence="2">
    <location>
        <begin position="557"/>
        <end position="566"/>
    </location>
</feature>
<feature type="compositionally biased region" description="Polar residues" evidence="2">
    <location>
        <begin position="581"/>
        <end position="597"/>
    </location>
</feature>
<feature type="compositionally biased region" description="Polar residues" evidence="2">
    <location>
        <begin position="604"/>
        <end position="614"/>
    </location>
</feature>
<feature type="compositionally biased region" description="Polar residues" evidence="2">
    <location>
        <begin position="622"/>
        <end position="635"/>
    </location>
</feature>
<feature type="compositionally biased region" description="Low complexity" evidence="2">
    <location>
        <begin position="637"/>
        <end position="659"/>
    </location>
</feature>
<feature type="compositionally biased region" description="Polar residues" evidence="2">
    <location>
        <begin position="716"/>
        <end position="738"/>
    </location>
</feature>
<name>SFL1_CANAL</name>
<dbReference type="EMBL" id="CP017630">
    <property type="protein sequence ID" value="AOW31310.1"/>
    <property type="molecule type" value="Genomic_DNA"/>
</dbReference>
<dbReference type="RefSeq" id="XP_715888.2">
    <property type="nucleotide sequence ID" value="XM_710795.2"/>
</dbReference>
<dbReference type="SMR" id="Q5A287"/>
<dbReference type="BioGRID" id="1225536">
    <property type="interactions" value="3"/>
</dbReference>
<dbReference type="STRING" id="237561.Q5A287"/>
<dbReference type="EnsemblFungi" id="CR_05990C_A-T">
    <property type="protein sequence ID" value="CR_05990C_A-T-p1"/>
    <property type="gene ID" value="CR_05990C_A"/>
</dbReference>
<dbReference type="GeneID" id="3642498"/>
<dbReference type="KEGG" id="cal:CAALFM_CR05990CA"/>
<dbReference type="CGD" id="CAL0000178027">
    <property type="gene designation" value="SFL1"/>
</dbReference>
<dbReference type="VEuPathDB" id="FungiDB:CR_05990C_A"/>
<dbReference type="eggNOG" id="KOG0627">
    <property type="taxonomic scope" value="Eukaryota"/>
</dbReference>
<dbReference type="HOGENOM" id="CLU_370877_0_0_1"/>
<dbReference type="InParanoid" id="Q5A287"/>
<dbReference type="OrthoDB" id="60033at2759"/>
<dbReference type="PRO" id="PR:Q5A287"/>
<dbReference type="Proteomes" id="UP000000559">
    <property type="component" value="Chromosome R"/>
</dbReference>
<dbReference type="GO" id="GO:0000228">
    <property type="term" value="C:nuclear chromosome"/>
    <property type="evidence" value="ECO:0000314"/>
    <property type="project" value="CGD"/>
</dbReference>
<dbReference type="GO" id="GO:0005634">
    <property type="term" value="C:nucleus"/>
    <property type="evidence" value="ECO:0000314"/>
    <property type="project" value="CGD"/>
</dbReference>
<dbReference type="GO" id="GO:0003700">
    <property type="term" value="F:DNA-binding transcription factor activity"/>
    <property type="evidence" value="ECO:0007669"/>
    <property type="project" value="InterPro"/>
</dbReference>
<dbReference type="GO" id="GO:0061629">
    <property type="term" value="F:RNA polymerase II-specific DNA-binding transcription factor binding"/>
    <property type="evidence" value="ECO:0000314"/>
    <property type="project" value="CGD"/>
</dbReference>
<dbReference type="GO" id="GO:0043565">
    <property type="term" value="F:sequence-specific DNA binding"/>
    <property type="evidence" value="ECO:0007669"/>
    <property type="project" value="InterPro"/>
</dbReference>
<dbReference type="GO" id="GO:0030447">
    <property type="term" value="P:filamentous growth"/>
    <property type="evidence" value="ECO:0000315"/>
    <property type="project" value="CGD"/>
</dbReference>
<dbReference type="GO" id="GO:0044182">
    <property type="term" value="P:filamentous growth of a population of unicellular organisms"/>
    <property type="evidence" value="ECO:0000315"/>
    <property type="project" value="CGD"/>
</dbReference>
<dbReference type="GO" id="GO:0000128">
    <property type="term" value="P:flocculation"/>
    <property type="evidence" value="ECO:0000315"/>
    <property type="project" value="CGD"/>
</dbReference>
<dbReference type="GO" id="GO:1900429">
    <property type="term" value="P:negative regulation of filamentous growth of a population of unicellular organisms"/>
    <property type="evidence" value="ECO:0000315"/>
    <property type="project" value="CGD"/>
</dbReference>
<dbReference type="GO" id="GO:0000122">
    <property type="term" value="P:negative regulation of transcription by RNA polymerase II"/>
    <property type="evidence" value="ECO:0000314"/>
    <property type="project" value="CGD"/>
</dbReference>
<dbReference type="GO" id="GO:0009372">
    <property type="term" value="P:quorum sensing"/>
    <property type="evidence" value="ECO:0000315"/>
    <property type="project" value="CGD"/>
</dbReference>
<dbReference type="FunFam" id="1.10.10.10:FF:000229">
    <property type="entry name" value="HSF-type DNA-binding domain protein"/>
    <property type="match status" value="1"/>
</dbReference>
<dbReference type="Gene3D" id="1.10.10.10">
    <property type="entry name" value="Winged helix-like DNA-binding domain superfamily/Winged helix DNA-binding domain"/>
    <property type="match status" value="1"/>
</dbReference>
<dbReference type="InterPro" id="IPR000232">
    <property type="entry name" value="HSF_DNA-bd"/>
</dbReference>
<dbReference type="InterPro" id="IPR036388">
    <property type="entry name" value="WH-like_DNA-bd_sf"/>
</dbReference>
<dbReference type="InterPro" id="IPR036390">
    <property type="entry name" value="WH_DNA-bd_sf"/>
</dbReference>
<dbReference type="PANTHER" id="PTHR10015:SF396">
    <property type="entry name" value="FLOCCULATION SUPPRESSION PROTEIN"/>
    <property type="match status" value="1"/>
</dbReference>
<dbReference type="PANTHER" id="PTHR10015">
    <property type="entry name" value="HEAT SHOCK TRANSCRIPTION FACTOR"/>
    <property type="match status" value="1"/>
</dbReference>
<dbReference type="Pfam" id="PF00447">
    <property type="entry name" value="HSF_DNA-bind"/>
    <property type="match status" value="1"/>
</dbReference>
<dbReference type="PRINTS" id="PR00056">
    <property type="entry name" value="HSFDOMAIN"/>
</dbReference>
<dbReference type="SMART" id="SM00415">
    <property type="entry name" value="HSF"/>
    <property type="match status" value="1"/>
</dbReference>
<dbReference type="SUPFAM" id="SSF46785">
    <property type="entry name" value="Winged helix' DNA-binding domain"/>
    <property type="match status" value="1"/>
</dbReference>
<dbReference type="PROSITE" id="PS00434">
    <property type="entry name" value="HSF_DOMAIN"/>
    <property type="match status" value="1"/>
</dbReference>
<protein>
    <recommendedName>
        <fullName>Transcription factor SFL1</fullName>
    </recommendedName>
</protein>
<proteinExistence type="evidence at protein level"/>
<gene>
    <name type="primary">SFL1</name>
    <name type="ordered locus">CAALFM_CR05990CA</name>
    <name type="ORF">CaO19.454</name>
    <name type="ORF">CaO19.8085</name>
</gene>
<accession>Q5A287</accession>
<accession>A0A1D8PT48</accession>
<accession>Q5A2D8</accession>
<organism>
    <name type="scientific">Candida albicans (strain SC5314 / ATCC MYA-2876)</name>
    <name type="common">Yeast</name>
    <dbReference type="NCBI Taxonomy" id="237561"/>
    <lineage>
        <taxon>Eukaryota</taxon>
        <taxon>Fungi</taxon>
        <taxon>Dikarya</taxon>
        <taxon>Ascomycota</taxon>
        <taxon>Saccharomycotina</taxon>
        <taxon>Pichiomycetes</taxon>
        <taxon>Debaryomycetaceae</taxon>
        <taxon>Candida/Lodderomyces clade</taxon>
        <taxon>Candida</taxon>
    </lineage>
</organism>
<keyword id="KW-0238">DNA-binding</keyword>
<keyword id="KW-0539">Nucleus</keyword>
<keyword id="KW-1185">Reference proteome</keyword>
<keyword id="KW-0678">Repressor</keyword>
<keyword id="KW-0804">Transcription</keyword>
<keyword id="KW-0805">Transcription regulation</keyword>
<keyword id="KW-0843">Virulence</keyword>
<comment type="function">
    <text evidence="3 4 5 6 7 8">Transcription factor that plays a role of repressor of filamentous growth and flocculation. Antagonizes functions of SFL2 and FLO8. Plays a role in the hyphal repression induced by secreted factors like dodecanol by competitors such as Pseudomonas aeruginosa and Burkholderia cenocepacia.</text>
</comment>
<comment type="subcellular location">
    <subcellularLocation>
        <location evidence="3 4 6">Nucleus</location>
    </subcellularLocation>
    <text>Localizes to the nucleus in both yeast and hyphal cells.</text>
</comment>
<comment type="disruption phenotype">
    <text evidence="3 4 6">Enhances flocculation, filamentous growth, and hypha-specific gene expression in several media and at several growth temperatures.</text>
</comment>
<comment type="similarity">
    <text evidence="9">Belongs to the HSF family.</text>
</comment>
<reference key="1">
    <citation type="journal article" date="2004" name="Proc. Natl. Acad. Sci. U.S.A.">
        <title>The diploid genome sequence of Candida albicans.</title>
        <authorList>
            <person name="Jones T."/>
            <person name="Federspiel N.A."/>
            <person name="Chibana H."/>
            <person name="Dungan J."/>
            <person name="Kalman S."/>
            <person name="Magee B.B."/>
            <person name="Newport G."/>
            <person name="Thorstenson Y.R."/>
            <person name="Agabian N."/>
            <person name="Magee P.T."/>
            <person name="Davis R.W."/>
            <person name="Scherer S."/>
        </authorList>
    </citation>
    <scope>NUCLEOTIDE SEQUENCE [LARGE SCALE GENOMIC DNA]</scope>
    <source>
        <strain>SC5314 / ATCC MYA-2876</strain>
    </source>
</reference>
<reference key="2">
    <citation type="journal article" date="2007" name="Genome Biol.">
        <title>Assembly of the Candida albicans genome into sixteen supercontigs aligned on the eight chromosomes.</title>
        <authorList>
            <person name="van het Hoog M."/>
            <person name="Rast T.J."/>
            <person name="Martchenko M."/>
            <person name="Grindle S."/>
            <person name="Dignard D."/>
            <person name="Hogues H."/>
            <person name="Cuomo C."/>
            <person name="Berriman M."/>
            <person name="Scherer S."/>
            <person name="Magee B.B."/>
            <person name="Whiteway M."/>
            <person name="Chibana H."/>
            <person name="Nantel A."/>
            <person name="Magee P.T."/>
        </authorList>
    </citation>
    <scope>GENOME REANNOTATION</scope>
    <source>
        <strain>SC5314 / ATCC MYA-2876</strain>
    </source>
</reference>
<reference key="3">
    <citation type="journal article" date="2013" name="Genome Biol.">
        <title>Assembly of a phased diploid Candida albicans genome facilitates allele-specific measurements and provides a simple model for repeat and indel structure.</title>
        <authorList>
            <person name="Muzzey D."/>
            <person name="Schwartz K."/>
            <person name="Weissman J.S."/>
            <person name="Sherlock G."/>
        </authorList>
    </citation>
    <scope>NUCLEOTIDE SEQUENCE [LARGE SCALE GENOMIC DNA]</scope>
    <scope>GENOME REANNOTATION</scope>
    <source>
        <strain>SC5314 / ATCC MYA-2876</strain>
    </source>
</reference>
<reference key="4">
    <citation type="journal article" date="2007" name="Eukaryot. Cell">
        <title>Candida albicans Sfl1 suppresses flocculation and filamentation.</title>
        <authorList>
            <person name="Bauer J."/>
            <person name="Wendland J."/>
        </authorList>
    </citation>
    <scope>FUNCTION</scope>
    <scope>DISRUPTION PHENOTYPE</scope>
    <scope>SUBCELLULAR LOCATION</scope>
</reference>
<reference key="5">
    <citation type="journal article" date="2007" name="Eukaryot. Cell">
        <title>Roles of Candida albicans Sfl1 in hyphal development.</title>
        <authorList>
            <person name="Li Y."/>
            <person name="Su C."/>
            <person name="Mao X."/>
            <person name="Cao F."/>
            <person name="Chen J."/>
        </authorList>
    </citation>
    <scope>IDENTIFICATION</scope>
    <scope>DISRUPTION PHENOTYPE</scope>
    <scope>FUNCTION</scope>
    <scope>SUBCELLULAR LOCATION</scope>
</reference>
<reference key="6">
    <citation type="journal article" date="2011" name="Eukaryot. Cell">
        <title>The quorum-sensing molecules farnesol/homoserine lactone and dodecanol operate via distinct modes of action in Candida albicans.</title>
        <authorList>
            <person name="Hall R.A."/>
            <person name="Turner K.J."/>
            <person name="Chaloupka J."/>
            <person name="Cottier F."/>
            <person name="De Sordi L."/>
            <person name="Sanglard D."/>
            <person name="Levin L.R."/>
            <person name="Buck J."/>
            <person name="Muhlschlegel F.A."/>
        </authorList>
    </citation>
    <scope>DISRUPTION PHENOTYPE</scope>
    <scope>FUNCTION</scope>
    <scope>SUBCELLULAR LOCATION</scope>
</reference>
<reference key="7">
    <citation type="journal article" date="2011" name="FEMS Yeast Res.">
        <title>Candida albicans Sfl2, a temperature-induced transcriptional regulator, is required for virulence in a murine gastrointestinal infection model.</title>
        <authorList>
            <person name="Song W."/>
            <person name="Wang H."/>
            <person name="Chen J."/>
        </authorList>
    </citation>
    <scope>FUNCTION</scope>
</reference>
<reference key="8">
    <citation type="journal article" date="2012" name="PLoS ONE">
        <title>A versatile overexpression strategy in the pathogenic yeast Candida albicans: identification of regulators of morphogenesis and fitness.</title>
        <authorList>
            <person name="Chauvel M."/>
            <person name="Nesseir A."/>
            <person name="Cabral V."/>
            <person name="Znaidi S."/>
            <person name="Goyard S."/>
            <person name="Bachellier-Bassi S."/>
            <person name="Firon A."/>
            <person name="Legrand M."/>
            <person name="Diogo D."/>
            <person name="Naulleau C."/>
            <person name="Rossignol T."/>
            <person name="d'Enfert C."/>
        </authorList>
    </citation>
    <scope>FUNCTION</scope>
</reference>
<reference key="9">
    <citation type="journal article" date="2013" name="PLoS Pathog.">
        <title>A comprehensive functional portrait of two heat shock factor-type transcriptional regulators involved in Candida albicans morphogenesis and virulence.</title>
        <authorList>
            <person name="Znaidi S."/>
            <person name="Nesseir A."/>
            <person name="Chauvel M."/>
            <person name="Rossignol T."/>
            <person name="d'Enfert C."/>
        </authorList>
    </citation>
    <scope>FUNCTION</scope>
    <scope>DNA-BINDING</scope>
</reference>
<sequence length="805" mass="90145">MSHLVSSSLGTTTTATPTSRSPHTNHSTPYNQNSITSNRSSPVPKNSVNSRIIPQTMNPPIDMKSNNILNPEKDTDTSRGDHSESKASSISSASGTTTTNNNNVSNNNSTGKTQIVFIHKLYDMLHDESISHLIWWSPSLDSFYVTPGEEFSRVLSQYFKHTNIASFIRQLNMYGFHKVNEPFLNQDDQQQQQQLQSNRWEFRHSTNQFRKGDTESLKNIKRRSSKTLNAQKEVVNIKSLPPTSHPMEYNTGYSYQNEDSAHYFVHHHSITTMQSPADMRPRSPSTPIPMQPLAQQQQQQQQQQQQQQQQLPSQPVPNGPPVFSGPIPPGAVNQSPQEYLTRPSILNNVQGSFENATNFKFVELTNQINLLRNDFFTMNNRYEILQNELKYQTADSMAVLEILEKLSNDNRIATDIRDLKNVVSQRMQRLNNQFIPQQSNFAPHIPGQQQQQQHGNSVSSNYHLESTNVSRNPSTTNLNVAPQPYPLNPHYTIYANNRASGSSEINNGVFRAREDSNNSKRNLSVYDPLQPVPSRNSSRILIEESTPTHPPTNFNPQQSQSQSQVQLGPAMPPQGFRNRAESTYSPLSHSSNKSQILNKAPTPVNHSPLVQQQQKEAKQELNDSSVAPPSQSSLPVTRPLSRQQQQQQQTLHHPSTTSSRTNSLPNPVAEHPAPQSSYFMQRNSFNTVYEHQKSLRVPSPKRVRYATPPRSIPEQPISSTAPTTMITSTSKPTSTSGAAISRSENHSVVSLTGGALPSVSELDKSIRTGSSVSLPPIKSIKDNDNKNDNGNSDDNGNDHKKRKLE</sequence>
<evidence type="ECO:0000250" key="1"/>
<evidence type="ECO:0000256" key="2">
    <source>
        <dbReference type="SAM" id="MobiDB-lite"/>
    </source>
</evidence>
<evidence type="ECO:0000269" key="3">
    <source>
    </source>
</evidence>
<evidence type="ECO:0000269" key="4">
    <source>
    </source>
</evidence>
<evidence type="ECO:0000269" key="5">
    <source>
    </source>
</evidence>
<evidence type="ECO:0000269" key="6">
    <source>
    </source>
</evidence>
<evidence type="ECO:0000269" key="7">
    <source>
    </source>
</evidence>
<evidence type="ECO:0000269" key="8">
    <source>
    </source>
</evidence>
<evidence type="ECO:0000305" key="9"/>